<evidence type="ECO:0000255" key="1">
    <source>
        <dbReference type="HAMAP-Rule" id="MF_00453"/>
    </source>
</evidence>
<comment type="function">
    <text evidence="1">Involved in the gluconeogenesis. Catalyzes the conversion of oxaloacetate (OAA) to phosphoenolpyruvate (PEP) through direct phosphoryl transfer between the nucleoside triphosphate and OAA.</text>
</comment>
<comment type="catalytic activity">
    <reaction evidence="1">
        <text>oxaloacetate + ATP = phosphoenolpyruvate + ADP + CO2</text>
        <dbReference type="Rhea" id="RHEA:18617"/>
        <dbReference type="ChEBI" id="CHEBI:16452"/>
        <dbReference type="ChEBI" id="CHEBI:16526"/>
        <dbReference type="ChEBI" id="CHEBI:30616"/>
        <dbReference type="ChEBI" id="CHEBI:58702"/>
        <dbReference type="ChEBI" id="CHEBI:456216"/>
        <dbReference type="EC" id="4.1.1.49"/>
    </reaction>
</comment>
<comment type="cofactor">
    <cofactor evidence="1">
        <name>Mn(2+)</name>
        <dbReference type="ChEBI" id="CHEBI:29035"/>
    </cofactor>
    <text evidence="1">Binds 1 Mn(2+) ion per subunit.</text>
</comment>
<comment type="pathway">
    <text evidence="1">Carbohydrate biosynthesis; gluconeogenesis.</text>
</comment>
<comment type="subunit">
    <text evidence="1">Monomer.</text>
</comment>
<comment type="subcellular location">
    <subcellularLocation>
        <location evidence="1">Cytoplasm</location>
    </subcellularLocation>
</comment>
<comment type="similarity">
    <text evidence="1">Belongs to the phosphoenolpyruvate carboxykinase (ATP) family.</text>
</comment>
<organism>
    <name type="scientific">Yersinia pseudotuberculosis serotype O:1b (strain IP 31758)</name>
    <dbReference type="NCBI Taxonomy" id="349747"/>
    <lineage>
        <taxon>Bacteria</taxon>
        <taxon>Pseudomonadati</taxon>
        <taxon>Pseudomonadota</taxon>
        <taxon>Gammaproteobacteria</taxon>
        <taxon>Enterobacterales</taxon>
        <taxon>Yersiniaceae</taxon>
        <taxon>Yersinia</taxon>
    </lineage>
</organism>
<dbReference type="EC" id="4.1.1.49" evidence="1"/>
<dbReference type="EMBL" id="CP000720">
    <property type="protein sequence ID" value="ABS47683.1"/>
    <property type="molecule type" value="Genomic_DNA"/>
</dbReference>
<dbReference type="RefSeq" id="WP_012105887.1">
    <property type="nucleotide sequence ID" value="NC_009708.1"/>
</dbReference>
<dbReference type="SMR" id="A7FNU8"/>
<dbReference type="KEGG" id="ypi:YpsIP31758_3978"/>
<dbReference type="HOGENOM" id="CLU_018247_0_1_6"/>
<dbReference type="UniPathway" id="UPA00138"/>
<dbReference type="Proteomes" id="UP000002412">
    <property type="component" value="Chromosome"/>
</dbReference>
<dbReference type="GO" id="GO:0005829">
    <property type="term" value="C:cytosol"/>
    <property type="evidence" value="ECO:0007669"/>
    <property type="project" value="TreeGrafter"/>
</dbReference>
<dbReference type="GO" id="GO:0005524">
    <property type="term" value="F:ATP binding"/>
    <property type="evidence" value="ECO:0007669"/>
    <property type="project" value="UniProtKB-UniRule"/>
</dbReference>
<dbReference type="GO" id="GO:0046872">
    <property type="term" value="F:metal ion binding"/>
    <property type="evidence" value="ECO:0007669"/>
    <property type="project" value="UniProtKB-KW"/>
</dbReference>
<dbReference type="GO" id="GO:0004612">
    <property type="term" value="F:phosphoenolpyruvate carboxykinase (ATP) activity"/>
    <property type="evidence" value="ECO:0007669"/>
    <property type="project" value="UniProtKB-UniRule"/>
</dbReference>
<dbReference type="GO" id="GO:0006094">
    <property type="term" value="P:gluconeogenesis"/>
    <property type="evidence" value="ECO:0007669"/>
    <property type="project" value="UniProtKB-UniRule"/>
</dbReference>
<dbReference type="CDD" id="cd00484">
    <property type="entry name" value="PEPCK_ATP"/>
    <property type="match status" value="1"/>
</dbReference>
<dbReference type="FunFam" id="2.170.8.10:FF:000001">
    <property type="entry name" value="Phosphoenolpyruvate carboxykinase (ATP)"/>
    <property type="match status" value="1"/>
</dbReference>
<dbReference type="FunFam" id="3.40.449.10:FF:000001">
    <property type="entry name" value="Phosphoenolpyruvate carboxykinase (ATP)"/>
    <property type="match status" value="1"/>
</dbReference>
<dbReference type="Gene3D" id="3.90.228.20">
    <property type="match status" value="1"/>
</dbReference>
<dbReference type="Gene3D" id="3.40.449.10">
    <property type="entry name" value="Phosphoenolpyruvate Carboxykinase, domain 1"/>
    <property type="match status" value="1"/>
</dbReference>
<dbReference type="Gene3D" id="2.170.8.10">
    <property type="entry name" value="Phosphoenolpyruvate Carboxykinase, domain 2"/>
    <property type="match status" value="1"/>
</dbReference>
<dbReference type="HAMAP" id="MF_00453">
    <property type="entry name" value="PEPCK_ATP"/>
    <property type="match status" value="1"/>
</dbReference>
<dbReference type="InterPro" id="IPR001272">
    <property type="entry name" value="PEP_carboxykinase_ATP"/>
</dbReference>
<dbReference type="InterPro" id="IPR013035">
    <property type="entry name" value="PEP_carboxykinase_C"/>
</dbReference>
<dbReference type="InterPro" id="IPR008210">
    <property type="entry name" value="PEP_carboxykinase_N"/>
</dbReference>
<dbReference type="InterPro" id="IPR015994">
    <property type="entry name" value="PEPCK_ATP_CS"/>
</dbReference>
<dbReference type="NCBIfam" id="TIGR00224">
    <property type="entry name" value="pckA"/>
    <property type="match status" value="1"/>
</dbReference>
<dbReference type="NCBIfam" id="NF006819">
    <property type="entry name" value="PRK09344.1-1"/>
    <property type="match status" value="1"/>
</dbReference>
<dbReference type="NCBIfam" id="NF006820">
    <property type="entry name" value="PRK09344.1-2"/>
    <property type="match status" value="1"/>
</dbReference>
<dbReference type="NCBIfam" id="NF006821">
    <property type="entry name" value="PRK09344.1-3"/>
    <property type="match status" value="1"/>
</dbReference>
<dbReference type="PANTHER" id="PTHR30031:SF0">
    <property type="entry name" value="PHOSPHOENOLPYRUVATE CARBOXYKINASE (ATP)"/>
    <property type="match status" value="1"/>
</dbReference>
<dbReference type="PANTHER" id="PTHR30031">
    <property type="entry name" value="PHOSPHOENOLPYRUVATE CARBOXYKINASE ATP"/>
    <property type="match status" value="1"/>
</dbReference>
<dbReference type="Pfam" id="PF01293">
    <property type="entry name" value="PEPCK_ATP"/>
    <property type="match status" value="1"/>
</dbReference>
<dbReference type="PIRSF" id="PIRSF006294">
    <property type="entry name" value="PEP_crbxkin"/>
    <property type="match status" value="1"/>
</dbReference>
<dbReference type="SUPFAM" id="SSF68923">
    <property type="entry name" value="PEP carboxykinase N-terminal domain"/>
    <property type="match status" value="1"/>
</dbReference>
<dbReference type="SUPFAM" id="SSF53795">
    <property type="entry name" value="PEP carboxykinase-like"/>
    <property type="match status" value="1"/>
</dbReference>
<dbReference type="PROSITE" id="PS00532">
    <property type="entry name" value="PEPCK_ATP"/>
    <property type="match status" value="1"/>
</dbReference>
<feature type="chain" id="PRO_1000060310" description="Phosphoenolpyruvate carboxykinase (ATP)">
    <location>
        <begin position="1"/>
        <end position="539"/>
    </location>
</feature>
<feature type="binding site" evidence="1">
    <location>
        <position position="64"/>
    </location>
    <ligand>
        <name>substrate</name>
    </ligand>
</feature>
<feature type="binding site" evidence="1">
    <location>
        <position position="206"/>
    </location>
    <ligand>
        <name>substrate</name>
    </ligand>
</feature>
<feature type="binding site" evidence="1">
    <location>
        <position position="212"/>
    </location>
    <ligand>
        <name>ATP</name>
        <dbReference type="ChEBI" id="CHEBI:30616"/>
    </ligand>
</feature>
<feature type="binding site" evidence="1">
    <location>
        <position position="212"/>
    </location>
    <ligand>
        <name>Mn(2+)</name>
        <dbReference type="ChEBI" id="CHEBI:29035"/>
    </ligand>
</feature>
<feature type="binding site" evidence="1">
    <location>
        <position position="212"/>
    </location>
    <ligand>
        <name>substrate</name>
    </ligand>
</feature>
<feature type="binding site" evidence="1">
    <location>
        <position position="231"/>
    </location>
    <ligand>
        <name>ATP</name>
        <dbReference type="ChEBI" id="CHEBI:30616"/>
    </ligand>
</feature>
<feature type="binding site" evidence="1">
    <location>
        <position position="231"/>
    </location>
    <ligand>
        <name>Mn(2+)</name>
        <dbReference type="ChEBI" id="CHEBI:29035"/>
    </ligand>
</feature>
<feature type="binding site" evidence="1">
    <location>
        <begin position="247"/>
        <end position="255"/>
    </location>
    <ligand>
        <name>ATP</name>
        <dbReference type="ChEBI" id="CHEBI:30616"/>
    </ligand>
</feature>
<feature type="binding site" evidence="1">
    <location>
        <position position="268"/>
    </location>
    <ligand>
        <name>Mn(2+)</name>
        <dbReference type="ChEBI" id="CHEBI:29035"/>
    </ligand>
</feature>
<feature type="binding site" evidence="1">
    <location>
        <position position="296"/>
    </location>
    <ligand>
        <name>ATP</name>
        <dbReference type="ChEBI" id="CHEBI:30616"/>
    </ligand>
</feature>
<feature type="binding site" evidence="1">
    <location>
        <position position="332"/>
    </location>
    <ligand>
        <name>ATP</name>
        <dbReference type="ChEBI" id="CHEBI:30616"/>
    </ligand>
</feature>
<feature type="binding site" evidence="1">
    <location>
        <position position="332"/>
    </location>
    <ligand>
        <name>substrate</name>
    </ligand>
</feature>
<feature type="binding site" evidence="1">
    <location>
        <begin position="448"/>
        <end position="449"/>
    </location>
    <ligand>
        <name>ATP</name>
        <dbReference type="ChEBI" id="CHEBI:30616"/>
    </ligand>
</feature>
<feature type="binding site" evidence="1">
    <location>
        <position position="454"/>
    </location>
    <ligand>
        <name>ATP</name>
        <dbReference type="ChEBI" id="CHEBI:30616"/>
    </ligand>
</feature>
<gene>
    <name evidence="1" type="primary">pckA</name>
    <name type="ordered locus">YpsIP31758_3978</name>
</gene>
<protein>
    <recommendedName>
        <fullName evidence="1">Phosphoenolpyruvate carboxykinase (ATP)</fullName>
        <shortName evidence="1">PCK</shortName>
        <shortName evidence="1">PEP carboxykinase</shortName>
        <shortName evidence="1">PEPCK</shortName>
        <ecNumber evidence="1">4.1.1.49</ecNumber>
    </recommendedName>
</protein>
<accession>A7FNU8</accession>
<reference key="1">
    <citation type="journal article" date="2007" name="PLoS Genet.">
        <title>The complete genome sequence of Yersinia pseudotuberculosis IP31758, the causative agent of Far East scarlet-like fever.</title>
        <authorList>
            <person name="Eppinger M."/>
            <person name="Rosovitz M.J."/>
            <person name="Fricke W.F."/>
            <person name="Rasko D.A."/>
            <person name="Kokorina G."/>
            <person name="Fayolle C."/>
            <person name="Lindler L.E."/>
            <person name="Carniel E."/>
            <person name="Ravel J."/>
        </authorList>
    </citation>
    <scope>NUCLEOTIDE SEQUENCE [LARGE SCALE GENOMIC DNA]</scope>
    <source>
        <strain>IP 31758</strain>
    </source>
</reference>
<name>PCKA_YERP3</name>
<sequence>MSVKGITPQELAAYGIHNVSEIVYNPSYDLLFEEETKPTLEGYERGTLTTTGAIAVDTGIFTGRSPKDKYIVRDAITQDTVWWADQGKGKNDNKPLSQEIWSHLKGLVTEQLSGKRLFVVDTFCGANADTRLQVRFITEVAWQAHFVKNMFIRPSDEELARFEPDFIVMNGAKCTNPQWKEQGLNSENFVAFNLTERMQLIGGTWYGGEMKKGMFSMMNYLLPLKGIASMHCSANVGEKGDVAIFFGLSGTGKTTLSTDPKRKLIGDDEHGWDDDGVFNFEGGCYAKTIKLSEEAEPDIYHAIKRDALLENVVVLADGTVDFNDGSKTENTRVSYPIYHIDNIVKPVSKAGHATKVIFLTADAFGVLPPVSRLTANQTQYHFLSGFTAKLAGTERGVTEPTPTFSACFGAAFLSLHPTQYAEVLVKRMQAVGAQAYLVNTGWNGTGKRISIKDTRAIIDAILNGEIDKAETFTLPIFDLAVPMSLPGVNPDILDPRDTYADKAQWQEKAEDLAKRFATNFDKYTDTPAGAALVSAGPKI</sequence>
<keyword id="KW-0067">ATP-binding</keyword>
<keyword id="KW-0963">Cytoplasm</keyword>
<keyword id="KW-0210">Decarboxylase</keyword>
<keyword id="KW-0312">Gluconeogenesis</keyword>
<keyword id="KW-0456">Lyase</keyword>
<keyword id="KW-0464">Manganese</keyword>
<keyword id="KW-0479">Metal-binding</keyword>
<keyword id="KW-0547">Nucleotide-binding</keyword>
<proteinExistence type="inferred from homology"/>